<organism>
    <name type="scientific">Staphylococcus aureus (strain Mu50 / ATCC 700699)</name>
    <dbReference type="NCBI Taxonomy" id="158878"/>
    <lineage>
        <taxon>Bacteria</taxon>
        <taxon>Bacillati</taxon>
        <taxon>Bacillota</taxon>
        <taxon>Bacilli</taxon>
        <taxon>Bacillales</taxon>
        <taxon>Staphylococcaceae</taxon>
        <taxon>Staphylococcus</taxon>
    </lineage>
</organism>
<protein>
    <recommendedName>
        <fullName evidence="1">Large ribosomal subunit protein uL3</fullName>
    </recommendedName>
    <alternativeName>
        <fullName evidence="3">50S ribosomal protein L3</fullName>
    </alternativeName>
</protein>
<gene>
    <name evidence="1" type="primary">rplC</name>
    <name type="ordered locus">SAV2250</name>
</gene>
<accession>P60448</accession>
<accession>Q99S21</accession>
<keyword id="KW-0687">Ribonucleoprotein</keyword>
<keyword id="KW-0689">Ribosomal protein</keyword>
<keyword id="KW-0694">RNA-binding</keyword>
<keyword id="KW-0699">rRNA-binding</keyword>
<feature type="chain" id="PRO_0000077154" description="Large ribosomal subunit protein uL3">
    <location>
        <begin position="1"/>
        <end position="220"/>
    </location>
</feature>
<feature type="region of interest" description="Disordered" evidence="2">
    <location>
        <begin position="130"/>
        <end position="156"/>
    </location>
</feature>
<name>RL3_STAAM</name>
<proteinExistence type="inferred from homology"/>
<sequence>MTKGILGRKIGMTQVFGENGELIPVTVVEAKENVVLQKKTVEVDGYNAIQVGFEDKKAYKKDAKSNKYANKPAEGHAKKADAAPKRFIREFRNVDVDAYEVGQEVSVDTFVAGDVIDVTGVSKGKGFQGAIKRHGQSRGPMSHGSHFHRAPGSVGMASDASRVFKGQKMPGRMGGNTVTVQNLEVVQVDTENKVILVKGNVPGPKKGLVEIRTSIKKGNK</sequence>
<dbReference type="EMBL" id="BA000017">
    <property type="protein sequence ID" value="BAB58412.1"/>
    <property type="molecule type" value="Genomic_DNA"/>
</dbReference>
<dbReference type="RefSeq" id="WP_000160212.1">
    <property type="nucleotide sequence ID" value="NC_002758.2"/>
</dbReference>
<dbReference type="SMR" id="P60448"/>
<dbReference type="GeneID" id="98346562"/>
<dbReference type="KEGG" id="sav:SAV2250"/>
<dbReference type="HOGENOM" id="CLU_044142_4_1_9"/>
<dbReference type="PhylomeDB" id="P60448"/>
<dbReference type="Proteomes" id="UP000002481">
    <property type="component" value="Chromosome"/>
</dbReference>
<dbReference type="GO" id="GO:0022625">
    <property type="term" value="C:cytosolic large ribosomal subunit"/>
    <property type="evidence" value="ECO:0007669"/>
    <property type="project" value="TreeGrafter"/>
</dbReference>
<dbReference type="GO" id="GO:0019843">
    <property type="term" value="F:rRNA binding"/>
    <property type="evidence" value="ECO:0007669"/>
    <property type="project" value="UniProtKB-UniRule"/>
</dbReference>
<dbReference type="GO" id="GO:0003735">
    <property type="term" value="F:structural constituent of ribosome"/>
    <property type="evidence" value="ECO:0007669"/>
    <property type="project" value="InterPro"/>
</dbReference>
<dbReference type="GO" id="GO:0006412">
    <property type="term" value="P:translation"/>
    <property type="evidence" value="ECO:0007669"/>
    <property type="project" value="UniProtKB-UniRule"/>
</dbReference>
<dbReference type="FunFam" id="2.40.30.10:FF:000004">
    <property type="entry name" value="50S ribosomal protein L3"/>
    <property type="match status" value="1"/>
</dbReference>
<dbReference type="FunFam" id="3.30.160.810:FF:000002">
    <property type="entry name" value="50S ribosomal protein L3"/>
    <property type="match status" value="1"/>
</dbReference>
<dbReference type="Gene3D" id="3.30.160.810">
    <property type="match status" value="1"/>
</dbReference>
<dbReference type="Gene3D" id="2.40.30.10">
    <property type="entry name" value="Translation factors"/>
    <property type="match status" value="1"/>
</dbReference>
<dbReference type="HAMAP" id="MF_01325_B">
    <property type="entry name" value="Ribosomal_uL3_B"/>
    <property type="match status" value="1"/>
</dbReference>
<dbReference type="InterPro" id="IPR000597">
    <property type="entry name" value="Ribosomal_uL3"/>
</dbReference>
<dbReference type="InterPro" id="IPR019927">
    <property type="entry name" value="Ribosomal_uL3_bac/org-type"/>
</dbReference>
<dbReference type="InterPro" id="IPR019926">
    <property type="entry name" value="Ribosomal_uL3_CS"/>
</dbReference>
<dbReference type="InterPro" id="IPR009000">
    <property type="entry name" value="Transl_B-barrel_sf"/>
</dbReference>
<dbReference type="NCBIfam" id="TIGR03625">
    <property type="entry name" value="L3_bact"/>
    <property type="match status" value="1"/>
</dbReference>
<dbReference type="PANTHER" id="PTHR11229">
    <property type="entry name" value="50S RIBOSOMAL PROTEIN L3"/>
    <property type="match status" value="1"/>
</dbReference>
<dbReference type="PANTHER" id="PTHR11229:SF16">
    <property type="entry name" value="LARGE RIBOSOMAL SUBUNIT PROTEIN UL3C"/>
    <property type="match status" value="1"/>
</dbReference>
<dbReference type="Pfam" id="PF00297">
    <property type="entry name" value="Ribosomal_L3"/>
    <property type="match status" value="1"/>
</dbReference>
<dbReference type="SUPFAM" id="SSF50447">
    <property type="entry name" value="Translation proteins"/>
    <property type="match status" value="1"/>
</dbReference>
<dbReference type="PROSITE" id="PS00474">
    <property type="entry name" value="RIBOSOMAL_L3"/>
    <property type="match status" value="1"/>
</dbReference>
<evidence type="ECO:0000255" key="1">
    <source>
        <dbReference type="HAMAP-Rule" id="MF_01325"/>
    </source>
</evidence>
<evidence type="ECO:0000256" key="2">
    <source>
        <dbReference type="SAM" id="MobiDB-lite"/>
    </source>
</evidence>
<evidence type="ECO:0000305" key="3"/>
<reference key="1">
    <citation type="journal article" date="2001" name="Lancet">
        <title>Whole genome sequencing of meticillin-resistant Staphylococcus aureus.</title>
        <authorList>
            <person name="Kuroda M."/>
            <person name="Ohta T."/>
            <person name="Uchiyama I."/>
            <person name="Baba T."/>
            <person name="Yuzawa H."/>
            <person name="Kobayashi I."/>
            <person name="Cui L."/>
            <person name="Oguchi A."/>
            <person name="Aoki K."/>
            <person name="Nagai Y."/>
            <person name="Lian J.-Q."/>
            <person name="Ito T."/>
            <person name="Kanamori M."/>
            <person name="Matsumaru H."/>
            <person name="Maruyama A."/>
            <person name="Murakami H."/>
            <person name="Hosoyama A."/>
            <person name="Mizutani-Ui Y."/>
            <person name="Takahashi N.K."/>
            <person name="Sawano T."/>
            <person name="Inoue R."/>
            <person name="Kaito C."/>
            <person name="Sekimizu K."/>
            <person name="Hirakawa H."/>
            <person name="Kuhara S."/>
            <person name="Goto S."/>
            <person name="Yabuzaki J."/>
            <person name="Kanehisa M."/>
            <person name="Yamashita A."/>
            <person name="Oshima K."/>
            <person name="Furuya K."/>
            <person name="Yoshino C."/>
            <person name="Shiba T."/>
            <person name="Hattori M."/>
            <person name="Ogasawara N."/>
            <person name="Hayashi H."/>
            <person name="Hiramatsu K."/>
        </authorList>
    </citation>
    <scope>NUCLEOTIDE SEQUENCE [LARGE SCALE GENOMIC DNA]</scope>
    <source>
        <strain>Mu50 / ATCC 700699</strain>
    </source>
</reference>
<comment type="function">
    <text evidence="1">One of the primary rRNA binding proteins, it binds directly near the 3'-end of the 23S rRNA, where it nucleates assembly of the 50S subunit.</text>
</comment>
<comment type="subunit">
    <text evidence="1">Part of the 50S ribosomal subunit. Forms a cluster with proteins L14 and L19.</text>
</comment>
<comment type="similarity">
    <text evidence="1">Belongs to the universal ribosomal protein uL3 family.</text>
</comment>